<gene>
    <name evidence="1" type="primary">ilvC</name>
    <name type="ordered locus">SAOUHSC_02284</name>
</gene>
<dbReference type="EC" id="1.1.1.86" evidence="1"/>
<dbReference type="EMBL" id="CP000253">
    <property type="protein sequence ID" value="ABD31322.1"/>
    <property type="molecule type" value="Genomic_DNA"/>
</dbReference>
<dbReference type="RefSeq" id="WP_000214557.1">
    <property type="nucleotide sequence ID" value="NZ_LS483365.1"/>
</dbReference>
<dbReference type="RefSeq" id="YP_500766.1">
    <property type="nucleotide sequence ID" value="NC_007795.1"/>
</dbReference>
<dbReference type="PDB" id="5W3K">
    <property type="method" value="X-ray"/>
    <property type="resolution" value="1.59 A"/>
    <property type="chains" value="A/B=1-334"/>
</dbReference>
<dbReference type="PDB" id="6AQJ">
    <property type="method" value="X-ray"/>
    <property type="resolution" value="1.37 A"/>
    <property type="chains" value="A/B=2-334"/>
</dbReference>
<dbReference type="PDB" id="6BUL">
    <property type="method" value="X-ray"/>
    <property type="resolution" value="1.88 A"/>
    <property type="chains" value="A/B=1-334"/>
</dbReference>
<dbReference type="PDB" id="6C55">
    <property type="method" value="X-ray"/>
    <property type="resolution" value="2.09 A"/>
    <property type="chains" value="A/B=1-334"/>
</dbReference>
<dbReference type="PDB" id="6C5N">
    <property type="method" value="X-ray"/>
    <property type="resolution" value="1.67 A"/>
    <property type="chains" value="A/B=2-334"/>
</dbReference>
<dbReference type="PDB" id="6VO2">
    <property type="method" value="X-ray"/>
    <property type="resolution" value="1.59 A"/>
    <property type="chains" value="A/B=1-334"/>
</dbReference>
<dbReference type="PDB" id="7KE2">
    <property type="method" value="X-ray"/>
    <property type="resolution" value="2.59 A"/>
    <property type="chains" value="A/B=1-334"/>
</dbReference>
<dbReference type="PDB" id="7KH7">
    <property type="method" value="X-ray"/>
    <property type="resolution" value="2.63 A"/>
    <property type="chains" value="A/B=1-334"/>
</dbReference>
<dbReference type="PDBsum" id="5W3K"/>
<dbReference type="PDBsum" id="6AQJ"/>
<dbReference type="PDBsum" id="6BUL"/>
<dbReference type="PDBsum" id="6C55"/>
<dbReference type="PDBsum" id="6C5N"/>
<dbReference type="PDBsum" id="6VO2"/>
<dbReference type="PDBsum" id="7KE2"/>
<dbReference type="PDBsum" id="7KH7"/>
<dbReference type="SMR" id="Q2FWK4"/>
<dbReference type="STRING" id="93061.SAOUHSC_02284"/>
<dbReference type="PaxDb" id="1280-SAXN108_2299"/>
<dbReference type="GeneID" id="3919159"/>
<dbReference type="KEGG" id="sao:SAOUHSC_02284"/>
<dbReference type="PATRIC" id="fig|93061.5.peg.2074"/>
<dbReference type="eggNOG" id="COG0059">
    <property type="taxonomic scope" value="Bacteria"/>
</dbReference>
<dbReference type="HOGENOM" id="CLU_033821_0_1_9"/>
<dbReference type="OrthoDB" id="9804088at2"/>
<dbReference type="UniPathway" id="UPA00047">
    <property type="reaction ID" value="UER00056"/>
</dbReference>
<dbReference type="UniPathway" id="UPA00049">
    <property type="reaction ID" value="UER00060"/>
</dbReference>
<dbReference type="PRO" id="PR:Q2FWK4"/>
<dbReference type="Proteomes" id="UP000008816">
    <property type="component" value="Chromosome"/>
</dbReference>
<dbReference type="GO" id="GO:0005829">
    <property type="term" value="C:cytosol"/>
    <property type="evidence" value="ECO:0000318"/>
    <property type="project" value="GO_Central"/>
</dbReference>
<dbReference type="GO" id="GO:0004455">
    <property type="term" value="F:ketol-acid reductoisomerase activity"/>
    <property type="evidence" value="ECO:0000318"/>
    <property type="project" value="GO_Central"/>
</dbReference>
<dbReference type="GO" id="GO:0000287">
    <property type="term" value="F:magnesium ion binding"/>
    <property type="evidence" value="ECO:0007669"/>
    <property type="project" value="UniProtKB-UniRule"/>
</dbReference>
<dbReference type="GO" id="GO:0050661">
    <property type="term" value="F:NADP binding"/>
    <property type="evidence" value="ECO:0007669"/>
    <property type="project" value="InterPro"/>
</dbReference>
<dbReference type="GO" id="GO:0009097">
    <property type="term" value="P:isoleucine biosynthetic process"/>
    <property type="evidence" value="ECO:0000318"/>
    <property type="project" value="GO_Central"/>
</dbReference>
<dbReference type="GO" id="GO:0009099">
    <property type="term" value="P:L-valine biosynthetic process"/>
    <property type="evidence" value="ECO:0000318"/>
    <property type="project" value="GO_Central"/>
</dbReference>
<dbReference type="FunFam" id="3.40.50.720:FF:000023">
    <property type="entry name" value="Ketol-acid reductoisomerase (NADP(+))"/>
    <property type="match status" value="1"/>
</dbReference>
<dbReference type="Gene3D" id="6.10.240.10">
    <property type="match status" value="1"/>
</dbReference>
<dbReference type="Gene3D" id="3.40.50.720">
    <property type="entry name" value="NAD(P)-binding Rossmann-like Domain"/>
    <property type="match status" value="1"/>
</dbReference>
<dbReference type="HAMAP" id="MF_00435">
    <property type="entry name" value="IlvC"/>
    <property type="match status" value="1"/>
</dbReference>
<dbReference type="InterPro" id="IPR008927">
    <property type="entry name" value="6-PGluconate_DH-like_C_sf"/>
</dbReference>
<dbReference type="InterPro" id="IPR013023">
    <property type="entry name" value="KARI"/>
</dbReference>
<dbReference type="InterPro" id="IPR000506">
    <property type="entry name" value="KARI_C"/>
</dbReference>
<dbReference type="InterPro" id="IPR013116">
    <property type="entry name" value="KARI_N"/>
</dbReference>
<dbReference type="InterPro" id="IPR014359">
    <property type="entry name" value="KARI_prok"/>
</dbReference>
<dbReference type="InterPro" id="IPR036291">
    <property type="entry name" value="NAD(P)-bd_dom_sf"/>
</dbReference>
<dbReference type="NCBIfam" id="TIGR00465">
    <property type="entry name" value="ilvC"/>
    <property type="match status" value="1"/>
</dbReference>
<dbReference type="NCBIfam" id="NF004017">
    <property type="entry name" value="PRK05479.1"/>
    <property type="match status" value="1"/>
</dbReference>
<dbReference type="NCBIfam" id="NF009940">
    <property type="entry name" value="PRK13403.1"/>
    <property type="match status" value="1"/>
</dbReference>
<dbReference type="PANTHER" id="PTHR21371">
    <property type="entry name" value="KETOL-ACID REDUCTOISOMERASE, MITOCHONDRIAL"/>
    <property type="match status" value="1"/>
</dbReference>
<dbReference type="PANTHER" id="PTHR21371:SF1">
    <property type="entry name" value="KETOL-ACID REDUCTOISOMERASE, MITOCHONDRIAL"/>
    <property type="match status" value="1"/>
</dbReference>
<dbReference type="Pfam" id="PF01450">
    <property type="entry name" value="KARI_C"/>
    <property type="match status" value="1"/>
</dbReference>
<dbReference type="Pfam" id="PF07991">
    <property type="entry name" value="KARI_N"/>
    <property type="match status" value="1"/>
</dbReference>
<dbReference type="PIRSF" id="PIRSF000116">
    <property type="entry name" value="IlvC_gammaproteo"/>
    <property type="match status" value="1"/>
</dbReference>
<dbReference type="SUPFAM" id="SSF48179">
    <property type="entry name" value="6-phosphogluconate dehydrogenase C-terminal domain-like"/>
    <property type="match status" value="1"/>
</dbReference>
<dbReference type="SUPFAM" id="SSF51735">
    <property type="entry name" value="NAD(P)-binding Rossmann-fold domains"/>
    <property type="match status" value="1"/>
</dbReference>
<dbReference type="PROSITE" id="PS51851">
    <property type="entry name" value="KARI_C"/>
    <property type="match status" value="1"/>
</dbReference>
<dbReference type="PROSITE" id="PS51850">
    <property type="entry name" value="KARI_N"/>
    <property type="match status" value="1"/>
</dbReference>
<sequence>MTTVYYDQDVKTDALQGKKIAVVGYGSQGHAHAQNLKDNGYDVVIGIRPGRSFDKAKEDGFDVFPVAEAVKQADVIMVLLPDEIQGDVYKNEIEPNLEKHNALAFAHGFNIHFGVIQPPADVDVFLVAPKGPGHLVRRTFVEGSAVPSLFGIQQGASGQARNIALSYAKGIGATRAGVIETTFKEETETDLFGEQAVLCGGVSKLIQSGFETLVEAGYQPELAYFEVLHEMKLIVDLMYEGGMENVRYSISNTAEFGDYVSGPRVITPDVKENMKAVLTDIQNGNFSNRFIEDNKNGFKEFYKLREEQHGHQIEKVGRELREMMPFIKSKSIEK</sequence>
<organism>
    <name type="scientific">Staphylococcus aureus (strain NCTC 8325 / PS 47)</name>
    <dbReference type="NCBI Taxonomy" id="93061"/>
    <lineage>
        <taxon>Bacteria</taxon>
        <taxon>Bacillati</taxon>
        <taxon>Bacillota</taxon>
        <taxon>Bacilli</taxon>
        <taxon>Bacillales</taxon>
        <taxon>Staphylococcaceae</taxon>
        <taxon>Staphylococcus</taxon>
    </lineage>
</organism>
<proteinExistence type="evidence at protein level"/>
<comment type="function">
    <text evidence="1">Involved in the biosynthesis of branched-chain amino acids (BCAA). Catalyzes an alkyl-migration followed by a ketol-acid reduction of (S)-2-acetolactate (S2AL) to yield (R)-2,3-dihydroxy-isovalerate. In the isomerase reaction, S2AL is rearranged via a Mg-dependent methyl migration to produce 3-hydroxy-3-methyl-2-ketobutyrate (HMKB). In the reductase reaction, this 2-ketoacid undergoes a metal-dependent reduction by NADPH to yield (R)-2,3-dihydroxy-isovalerate.</text>
</comment>
<comment type="catalytic activity">
    <reaction evidence="1">
        <text>(2R)-2,3-dihydroxy-3-methylbutanoate + NADP(+) = (2S)-2-acetolactate + NADPH + H(+)</text>
        <dbReference type="Rhea" id="RHEA:22068"/>
        <dbReference type="ChEBI" id="CHEBI:15378"/>
        <dbReference type="ChEBI" id="CHEBI:49072"/>
        <dbReference type="ChEBI" id="CHEBI:57783"/>
        <dbReference type="ChEBI" id="CHEBI:58349"/>
        <dbReference type="ChEBI" id="CHEBI:58476"/>
        <dbReference type="EC" id="1.1.1.86"/>
    </reaction>
</comment>
<comment type="catalytic activity">
    <reaction evidence="1">
        <text>(2R,3R)-2,3-dihydroxy-3-methylpentanoate + NADP(+) = (S)-2-ethyl-2-hydroxy-3-oxobutanoate + NADPH + H(+)</text>
        <dbReference type="Rhea" id="RHEA:13493"/>
        <dbReference type="ChEBI" id="CHEBI:15378"/>
        <dbReference type="ChEBI" id="CHEBI:49256"/>
        <dbReference type="ChEBI" id="CHEBI:49258"/>
        <dbReference type="ChEBI" id="CHEBI:57783"/>
        <dbReference type="ChEBI" id="CHEBI:58349"/>
        <dbReference type="EC" id="1.1.1.86"/>
    </reaction>
</comment>
<comment type="cofactor">
    <cofactor evidence="1">
        <name>Mg(2+)</name>
        <dbReference type="ChEBI" id="CHEBI:18420"/>
    </cofactor>
    <text evidence="1">Binds 2 magnesium ions per subunit.</text>
</comment>
<comment type="pathway">
    <text evidence="1">Amino-acid biosynthesis; L-isoleucine biosynthesis; L-isoleucine from 2-oxobutanoate: step 2/4.</text>
</comment>
<comment type="pathway">
    <text evidence="1">Amino-acid biosynthesis; L-valine biosynthesis; L-valine from pyruvate: step 2/4.</text>
</comment>
<comment type="similarity">
    <text evidence="1">Belongs to the ketol-acid reductoisomerase family.</text>
</comment>
<keyword id="KW-0002">3D-structure</keyword>
<keyword id="KW-0028">Amino-acid biosynthesis</keyword>
<keyword id="KW-0100">Branched-chain amino acid biosynthesis</keyword>
<keyword id="KW-0460">Magnesium</keyword>
<keyword id="KW-0479">Metal-binding</keyword>
<keyword id="KW-0521">NADP</keyword>
<keyword id="KW-0560">Oxidoreductase</keyword>
<keyword id="KW-1185">Reference proteome</keyword>
<evidence type="ECO:0000255" key="1">
    <source>
        <dbReference type="HAMAP-Rule" id="MF_00435"/>
    </source>
</evidence>
<evidence type="ECO:0000255" key="2">
    <source>
        <dbReference type="PROSITE-ProRule" id="PRU01197"/>
    </source>
</evidence>
<evidence type="ECO:0000255" key="3">
    <source>
        <dbReference type="PROSITE-ProRule" id="PRU01198"/>
    </source>
</evidence>
<evidence type="ECO:0007829" key="4">
    <source>
        <dbReference type="PDB" id="5W3K"/>
    </source>
</evidence>
<protein>
    <recommendedName>
        <fullName evidence="1">Ketol-acid reductoisomerase (NADP(+))</fullName>
        <shortName evidence="1">KARI</shortName>
        <ecNumber evidence="1">1.1.1.86</ecNumber>
    </recommendedName>
    <alternativeName>
        <fullName evidence="1">Acetohydroxy-acid isomeroreductase</fullName>
        <shortName evidence="1">AHIR</shortName>
    </alternativeName>
    <alternativeName>
        <fullName evidence="1">Alpha-keto-beta-hydroxylacyl reductoisomerase</fullName>
    </alternativeName>
    <alternativeName>
        <fullName evidence="1">Ketol-acid reductoisomerase type 1</fullName>
    </alternativeName>
    <alternativeName>
        <fullName evidence="1">Ketol-acid reductoisomerase type I</fullName>
    </alternativeName>
</protein>
<accession>Q2FWK4</accession>
<feature type="chain" id="PRO_0000252791" description="Ketol-acid reductoisomerase (NADP(+))">
    <location>
        <begin position="1"/>
        <end position="334"/>
    </location>
</feature>
<feature type="domain" description="KARI N-terminal Rossmann" evidence="2">
    <location>
        <begin position="1"/>
        <end position="181"/>
    </location>
</feature>
<feature type="domain" description="KARI C-terminal knotted" evidence="3">
    <location>
        <begin position="182"/>
        <end position="327"/>
    </location>
</feature>
<feature type="active site" evidence="1">
    <location>
        <position position="107"/>
    </location>
</feature>
<feature type="binding site" evidence="1">
    <location>
        <begin position="25"/>
        <end position="28"/>
    </location>
    <ligand>
        <name>NADP(+)</name>
        <dbReference type="ChEBI" id="CHEBI:58349"/>
    </ligand>
</feature>
<feature type="binding site" evidence="1">
    <location>
        <position position="48"/>
    </location>
    <ligand>
        <name>NADP(+)</name>
        <dbReference type="ChEBI" id="CHEBI:58349"/>
    </ligand>
</feature>
<feature type="binding site" evidence="1">
    <location>
        <position position="52"/>
    </location>
    <ligand>
        <name>NADP(+)</name>
        <dbReference type="ChEBI" id="CHEBI:58349"/>
    </ligand>
</feature>
<feature type="binding site" evidence="1">
    <location>
        <begin position="82"/>
        <end position="85"/>
    </location>
    <ligand>
        <name>NADP(+)</name>
        <dbReference type="ChEBI" id="CHEBI:58349"/>
    </ligand>
</feature>
<feature type="binding site" evidence="1">
    <location>
        <position position="133"/>
    </location>
    <ligand>
        <name>NADP(+)</name>
        <dbReference type="ChEBI" id="CHEBI:58349"/>
    </ligand>
</feature>
<feature type="binding site" evidence="1">
    <location>
        <position position="190"/>
    </location>
    <ligand>
        <name>Mg(2+)</name>
        <dbReference type="ChEBI" id="CHEBI:18420"/>
        <label>1</label>
    </ligand>
</feature>
<feature type="binding site" evidence="1">
    <location>
        <position position="190"/>
    </location>
    <ligand>
        <name>Mg(2+)</name>
        <dbReference type="ChEBI" id="CHEBI:18420"/>
        <label>2</label>
    </ligand>
</feature>
<feature type="binding site" evidence="1">
    <location>
        <position position="194"/>
    </location>
    <ligand>
        <name>Mg(2+)</name>
        <dbReference type="ChEBI" id="CHEBI:18420"/>
        <label>1</label>
    </ligand>
</feature>
<feature type="binding site" evidence="1">
    <location>
        <position position="226"/>
    </location>
    <ligand>
        <name>Mg(2+)</name>
        <dbReference type="ChEBI" id="CHEBI:18420"/>
        <label>2</label>
    </ligand>
</feature>
<feature type="binding site" evidence="1">
    <location>
        <position position="230"/>
    </location>
    <ligand>
        <name>Mg(2+)</name>
        <dbReference type="ChEBI" id="CHEBI:18420"/>
        <label>2</label>
    </ligand>
</feature>
<feature type="binding site" evidence="1">
    <location>
        <position position="251"/>
    </location>
    <ligand>
        <name>substrate</name>
    </ligand>
</feature>
<feature type="helix" evidence="4">
    <location>
        <begin position="7"/>
        <end position="9"/>
    </location>
</feature>
<feature type="turn" evidence="4">
    <location>
        <begin position="14"/>
        <end position="17"/>
    </location>
</feature>
<feature type="strand" evidence="4">
    <location>
        <begin position="19"/>
        <end position="23"/>
    </location>
</feature>
<feature type="helix" evidence="4">
    <location>
        <begin position="27"/>
        <end position="38"/>
    </location>
</feature>
<feature type="strand" evidence="4">
    <location>
        <begin position="42"/>
        <end position="46"/>
    </location>
</feature>
<feature type="helix" evidence="4">
    <location>
        <begin position="51"/>
        <end position="58"/>
    </location>
</feature>
<feature type="strand" evidence="4">
    <location>
        <begin position="62"/>
        <end position="64"/>
    </location>
</feature>
<feature type="helix" evidence="4">
    <location>
        <begin position="66"/>
        <end position="72"/>
    </location>
</feature>
<feature type="strand" evidence="4">
    <location>
        <begin position="74"/>
        <end position="78"/>
    </location>
</feature>
<feature type="helix" evidence="4">
    <location>
        <begin position="82"/>
        <end position="92"/>
    </location>
</feature>
<feature type="helix" evidence="4">
    <location>
        <begin position="94"/>
        <end position="96"/>
    </location>
</feature>
<feature type="strand" evidence="4">
    <location>
        <begin position="102"/>
        <end position="108"/>
    </location>
</feature>
<feature type="helix" evidence="4">
    <location>
        <begin position="109"/>
        <end position="112"/>
    </location>
</feature>
<feature type="strand" evidence="4">
    <location>
        <begin position="122"/>
        <end position="131"/>
    </location>
</feature>
<feature type="helix" evidence="4">
    <location>
        <begin position="133"/>
        <end position="142"/>
    </location>
</feature>
<feature type="strand" evidence="4">
    <location>
        <begin position="148"/>
        <end position="154"/>
    </location>
</feature>
<feature type="strand" evidence="4">
    <location>
        <begin position="156"/>
        <end position="158"/>
    </location>
</feature>
<feature type="helix" evidence="4">
    <location>
        <begin position="160"/>
        <end position="170"/>
    </location>
</feature>
<feature type="helix" evidence="4">
    <location>
        <begin position="173"/>
        <end position="175"/>
    </location>
</feature>
<feature type="strand" evidence="4">
    <location>
        <begin position="178"/>
        <end position="180"/>
    </location>
</feature>
<feature type="helix" evidence="4">
    <location>
        <begin position="183"/>
        <end position="196"/>
    </location>
</feature>
<feature type="turn" evidence="4">
    <location>
        <begin position="197"/>
        <end position="199"/>
    </location>
</feature>
<feature type="helix" evidence="4">
    <location>
        <begin position="200"/>
        <end position="215"/>
    </location>
</feature>
<feature type="helix" evidence="4">
    <location>
        <begin position="220"/>
        <end position="227"/>
    </location>
</feature>
<feature type="helix" evidence="4">
    <location>
        <begin position="229"/>
        <end position="249"/>
    </location>
</feature>
<feature type="helix" evidence="4">
    <location>
        <begin position="252"/>
        <end position="265"/>
    </location>
</feature>
<feature type="helix" evidence="4">
    <location>
        <begin position="268"/>
        <end position="282"/>
    </location>
</feature>
<feature type="helix" evidence="4">
    <location>
        <begin position="285"/>
        <end position="295"/>
    </location>
</feature>
<feature type="helix" evidence="4">
    <location>
        <begin position="299"/>
        <end position="308"/>
    </location>
</feature>
<feature type="helix" evidence="4">
    <location>
        <begin position="312"/>
        <end position="322"/>
    </location>
</feature>
<name>ILVC_STAA8</name>
<reference key="1">
    <citation type="book" date="2006" name="Gram positive pathogens, 2nd edition">
        <title>The Staphylococcus aureus NCTC 8325 genome.</title>
        <editorList>
            <person name="Fischetti V."/>
            <person name="Novick R."/>
            <person name="Ferretti J."/>
            <person name="Portnoy D."/>
            <person name="Rood J."/>
        </editorList>
        <authorList>
            <person name="Gillaspy A.F."/>
            <person name="Worrell V."/>
            <person name="Orvis J."/>
            <person name="Roe B.A."/>
            <person name="Dyer D.W."/>
            <person name="Iandolo J.J."/>
        </authorList>
    </citation>
    <scope>NUCLEOTIDE SEQUENCE [LARGE SCALE GENOMIC DNA]</scope>
    <source>
        <strain>NCTC 8325 / PS 47</strain>
    </source>
</reference>